<accession>P16873</accession>
<comment type="function">
    <text evidence="1">Catalyzes cross-linking of the peptidoglycan cell wall at the division septum.</text>
</comment>
<comment type="catalytic activity">
    <reaction evidence="1">
        <text>Preferential cleavage: (Ac)2-L-Lys-D-Ala-|-D-Ala. Also transpeptidation of peptidyl-alanyl moieties that are N-acyl substituents of D-alanine.</text>
        <dbReference type="EC" id="3.4.16.4"/>
    </reaction>
</comment>
<comment type="pathway">
    <text evidence="1">Cell wall biogenesis; peptidoglycan biosynthesis.</text>
</comment>
<comment type="subcellular location">
    <subcellularLocation>
        <location evidence="1">Cell inner membrane</location>
        <topology evidence="1">Single-pass membrane protein</topology>
    </subcellularLocation>
</comment>
<comment type="domain">
    <text>The enzyme has an N-terminal penicillin insensitive transglycosylase domain (formation of linear glycan strands) and a C-terminal penicillin-sensitive transpeptidase domain (cross-linking of the peptide subunits).</text>
</comment>
<comment type="similarity">
    <text evidence="4">Belongs to the transpeptidase family. FtsI subfamily.</text>
</comment>
<proteinExistence type="inferred from homology"/>
<protein>
    <recommendedName>
        <fullName evidence="4">Probable peptidoglycan D,D-transpeptidase PenA</fullName>
        <ecNumber evidence="1">3.4.16.4</ecNumber>
    </recommendedName>
    <alternativeName>
        <fullName evidence="3">Penicillin-binding protein 2</fullName>
        <shortName evidence="3">PBP-2</shortName>
    </alternativeName>
</protein>
<name>PBP2_NEIFL</name>
<sequence>NIDGKGQEGLELSREDSLRGEDGAKVVLRDNKGNIVDSLDSPRNSVPKNGQDMILSLDQRIQTLAYDELNKAVAYHKAKAGAVVVLDAQTGEILALVNSPAYDPNQPGQANSEQRRNRAVTDMIEPGSAMKPFTIAKALDSGKVDPTDTFNTLPYKIGPATVQDTHVYPTLDVRGIMQKSSNVGTSKLSAMFTPKEMYDFYHDLGVGVRMHSGFPGETAGLLRSWRRWQKIEQATMSFGYGLQLSLLQLARAYTVLTHDGELLPVSFEKQAVAPKGKRVIKASTAKKVRELMVSVTEAGGTGIAGAVDGFDVGAKTGTARKLVNGRYVDNKHVGTFIGFAPAKNPRVIVAVTIDEPTANGYYGGVVAGPVFKEVMSGSLNILGVSPTKPLSNTATVKVPS</sequence>
<evidence type="ECO:0000250" key="1">
    <source>
        <dbReference type="UniProtKB" id="P0AD68"/>
    </source>
</evidence>
<evidence type="ECO:0000256" key="2">
    <source>
        <dbReference type="SAM" id="MobiDB-lite"/>
    </source>
</evidence>
<evidence type="ECO:0000303" key="3">
    <source>
    </source>
</evidence>
<evidence type="ECO:0000305" key="4"/>
<keyword id="KW-0046">Antibiotic resistance</keyword>
<keyword id="KW-0121">Carboxypeptidase</keyword>
<keyword id="KW-0131">Cell cycle</keyword>
<keyword id="KW-0132">Cell division</keyword>
<keyword id="KW-0997">Cell inner membrane</keyword>
<keyword id="KW-1003">Cell membrane</keyword>
<keyword id="KW-0133">Cell shape</keyword>
<keyword id="KW-0961">Cell wall biogenesis/degradation</keyword>
<keyword id="KW-0378">Hydrolase</keyword>
<keyword id="KW-0472">Membrane</keyword>
<keyword id="KW-0573">Peptidoglycan synthesis</keyword>
<keyword id="KW-0645">Protease</keyword>
<keyword id="KW-0717">Septation</keyword>
<keyword id="KW-0812">Transmembrane</keyword>
<keyword id="KW-1133">Transmembrane helix</keyword>
<reference key="1">
    <citation type="journal article" date="1989" name="Proc. Natl. Acad. Sci. U.S.A.">
        <title>Recruitment of a penicillin-binding protein gene from Neisseria flavescens during the emergence of penicillin resistance in Neisseria meningitidis.</title>
        <authorList>
            <person name="Spratt B.G."/>
            <person name="Zhang Q.-Y."/>
            <person name="Jones D.M."/>
            <person name="Hutchison A."/>
            <person name="Brannigan J.A."/>
            <person name="Dowson C.G."/>
        </authorList>
    </citation>
    <scope>NUCLEOTIDE SEQUENCE [GENOMIC DNA]</scope>
</reference>
<feature type="chain" id="PRO_0000195450" description="Probable peptidoglycan D,D-transpeptidase PenA">
    <location>
        <begin position="1" status="less than"/>
        <end position="400"/>
    </location>
</feature>
<feature type="region of interest" description="Disordered" evidence="2">
    <location>
        <begin position="1"/>
        <end position="21"/>
    </location>
</feature>
<feature type="active site" description="Acyl-ester intermediate" evidence="1">
    <location>
        <position position="128"/>
    </location>
</feature>
<feature type="non-terminal residue">
    <location>
        <position position="1"/>
    </location>
</feature>
<gene>
    <name evidence="3" type="primary">penA</name>
</gene>
<dbReference type="EC" id="3.4.16.4" evidence="1"/>
<dbReference type="EMBL" id="M26645">
    <property type="protein sequence ID" value="AAA25464.1"/>
    <property type="molecule type" value="Genomic_DNA"/>
</dbReference>
<dbReference type="PIR" id="B36190">
    <property type="entry name" value="B36190"/>
</dbReference>
<dbReference type="SMR" id="P16873"/>
<dbReference type="STRING" id="484.TW91_0322"/>
<dbReference type="MEROPS" id="X52.001"/>
<dbReference type="UniPathway" id="UPA00219"/>
<dbReference type="GO" id="GO:0005886">
    <property type="term" value="C:plasma membrane"/>
    <property type="evidence" value="ECO:0007669"/>
    <property type="project" value="UniProtKB-SubCell"/>
</dbReference>
<dbReference type="GO" id="GO:0008658">
    <property type="term" value="F:penicillin binding"/>
    <property type="evidence" value="ECO:0007669"/>
    <property type="project" value="InterPro"/>
</dbReference>
<dbReference type="GO" id="GO:0009002">
    <property type="term" value="F:serine-type D-Ala-D-Ala carboxypeptidase activity"/>
    <property type="evidence" value="ECO:0007669"/>
    <property type="project" value="UniProtKB-EC"/>
</dbReference>
<dbReference type="GO" id="GO:0071555">
    <property type="term" value="P:cell wall organization"/>
    <property type="evidence" value="ECO:0007669"/>
    <property type="project" value="UniProtKB-KW"/>
</dbReference>
<dbReference type="GO" id="GO:0000917">
    <property type="term" value="P:division septum assembly"/>
    <property type="evidence" value="ECO:0007669"/>
    <property type="project" value="UniProtKB-KW"/>
</dbReference>
<dbReference type="GO" id="GO:0009252">
    <property type="term" value="P:peptidoglycan biosynthetic process"/>
    <property type="evidence" value="ECO:0007669"/>
    <property type="project" value="UniProtKB-UniPathway"/>
</dbReference>
<dbReference type="GO" id="GO:0006508">
    <property type="term" value="P:proteolysis"/>
    <property type="evidence" value="ECO:0007669"/>
    <property type="project" value="UniProtKB-KW"/>
</dbReference>
<dbReference type="GO" id="GO:0008360">
    <property type="term" value="P:regulation of cell shape"/>
    <property type="evidence" value="ECO:0007669"/>
    <property type="project" value="UniProtKB-KW"/>
</dbReference>
<dbReference type="GO" id="GO:0046677">
    <property type="term" value="P:response to antibiotic"/>
    <property type="evidence" value="ECO:0007669"/>
    <property type="project" value="UniProtKB-KW"/>
</dbReference>
<dbReference type="Gene3D" id="3.30.450.330">
    <property type="match status" value="1"/>
</dbReference>
<dbReference type="Gene3D" id="3.40.710.10">
    <property type="entry name" value="DD-peptidase/beta-lactamase superfamily"/>
    <property type="match status" value="1"/>
</dbReference>
<dbReference type="Gene3D" id="3.90.1310.10">
    <property type="entry name" value="Penicillin-binding protein 2a (Domain 2)"/>
    <property type="match status" value="1"/>
</dbReference>
<dbReference type="InterPro" id="IPR050515">
    <property type="entry name" value="Bact_Transpept/Beta-Lactamase"/>
</dbReference>
<dbReference type="InterPro" id="IPR012338">
    <property type="entry name" value="Beta-lactam/transpept-like"/>
</dbReference>
<dbReference type="InterPro" id="IPR001460">
    <property type="entry name" value="PCN-bd_Tpept"/>
</dbReference>
<dbReference type="PANTHER" id="PTHR30627">
    <property type="entry name" value="PEPTIDOGLYCAN D,D-TRANSPEPTIDASE"/>
    <property type="match status" value="1"/>
</dbReference>
<dbReference type="PANTHER" id="PTHR30627:SF1">
    <property type="entry name" value="PEPTIDOGLYCAN D,D-TRANSPEPTIDASE FTSI"/>
    <property type="match status" value="1"/>
</dbReference>
<dbReference type="Pfam" id="PF00905">
    <property type="entry name" value="Transpeptidase"/>
    <property type="match status" value="1"/>
</dbReference>
<dbReference type="SUPFAM" id="SSF56601">
    <property type="entry name" value="beta-lactamase/transpeptidase-like"/>
    <property type="match status" value="1"/>
</dbReference>
<organism>
    <name type="scientific">Neisseria flavescens</name>
    <dbReference type="NCBI Taxonomy" id="484"/>
    <lineage>
        <taxon>Bacteria</taxon>
        <taxon>Pseudomonadati</taxon>
        <taxon>Pseudomonadota</taxon>
        <taxon>Betaproteobacteria</taxon>
        <taxon>Neisseriales</taxon>
        <taxon>Neisseriaceae</taxon>
        <taxon>Neisseria</taxon>
    </lineage>
</organism>